<reference key="1">
    <citation type="journal article" date="2005" name="Genome Res.">
        <title>Comparative and functional genomic analyses of the pathogenicity of phytopathogen Xanthomonas campestris pv. campestris.</title>
        <authorList>
            <person name="Qian W."/>
            <person name="Jia Y."/>
            <person name="Ren S.-X."/>
            <person name="He Y.-Q."/>
            <person name="Feng J.-X."/>
            <person name="Lu L.-F."/>
            <person name="Sun Q."/>
            <person name="Ying G."/>
            <person name="Tang D.-J."/>
            <person name="Tang H."/>
            <person name="Wu W."/>
            <person name="Hao P."/>
            <person name="Wang L."/>
            <person name="Jiang B.-L."/>
            <person name="Zeng S."/>
            <person name="Gu W.-Y."/>
            <person name="Lu G."/>
            <person name="Rong L."/>
            <person name="Tian Y."/>
            <person name="Yao Z."/>
            <person name="Fu G."/>
            <person name="Chen B."/>
            <person name="Fang R."/>
            <person name="Qiang B."/>
            <person name="Chen Z."/>
            <person name="Zhao G.-P."/>
            <person name="Tang J.-L."/>
            <person name="He C."/>
        </authorList>
    </citation>
    <scope>NUCLEOTIDE SEQUENCE [LARGE SCALE GENOMIC DNA]</scope>
    <source>
        <strain>8004</strain>
    </source>
</reference>
<evidence type="ECO:0000255" key="1">
    <source>
        <dbReference type="HAMAP-Rule" id="MF_01361"/>
    </source>
</evidence>
<name>Y230_XANC8</name>
<keyword id="KW-1003">Cell membrane</keyword>
<keyword id="KW-0472">Membrane</keyword>
<keyword id="KW-0812">Transmembrane</keyword>
<keyword id="KW-1133">Transmembrane helix</keyword>
<comment type="subcellular location">
    <subcellularLocation>
        <location evidence="1">Cell membrane</location>
        <topology evidence="1">Multi-pass membrane protein</topology>
    </subcellularLocation>
</comment>
<comment type="similarity">
    <text evidence="1">Belongs to the UPF0391 family.</text>
</comment>
<protein>
    <recommendedName>
        <fullName evidence="1">UPF0391 membrane protein XC_0230</fullName>
    </recommendedName>
</protein>
<feature type="chain" id="PRO_0000256800" description="UPF0391 membrane protein XC_0230">
    <location>
        <begin position="1"/>
        <end position="52"/>
    </location>
</feature>
<feature type="transmembrane region" description="Helical" evidence="1">
    <location>
        <begin position="5"/>
        <end position="25"/>
    </location>
</feature>
<feature type="transmembrane region" description="Helical" evidence="1">
    <location>
        <begin position="27"/>
        <end position="47"/>
    </location>
</feature>
<gene>
    <name type="ordered locus">XC_0230</name>
</gene>
<organism>
    <name type="scientific">Xanthomonas campestris pv. campestris (strain 8004)</name>
    <dbReference type="NCBI Taxonomy" id="314565"/>
    <lineage>
        <taxon>Bacteria</taxon>
        <taxon>Pseudomonadati</taxon>
        <taxon>Pseudomonadota</taxon>
        <taxon>Gammaproteobacteria</taxon>
        <taxon>Lysobacterales</taxon>
        <taxon>Lysobacteraceae</taxon>
        <taxon>Xanthomonas</taxon>
    </lineage>
</organism>
<sequence length="52" mass="5640">MLHYAIIFFVIAIIAAVLGFSGIAGAATNIAWILFVVFLILAVISMFRRGKV</sequence>
<dbReference type="EMBL" id="CP000050">
    <property type="protein sequence ID" value="AAY47317.1"/>
    <property type="molecule type" value="Genomic_DNA"/>
</dbReference>
<dbReference type="RefSeq" id="WP_003468167.1">
    <property type="nucleotide sequence ID" value="NZ_CP155948.1"/>
</dbReference>
<dbReference type="KEGG" id="xcb:XC_0230"/>
<dbReference type="HOGENOM" id="CLU_187346_0_1_6"/>
<dbReference type="Proteomes" id="UP000000420">
    <property type="component" value="Chromosome"/>
</dbReference>
<dbReference type="GO" id="GO:0005886">
    <property type="term" value="C:plasma membrane"/>
    <property type="evidence" value="ECO:0007669"/>
    <property type="project" value="UniProtKB-SubCell"/>
</dbReference>
<dbReference type="HAMAP" id="MF_01361">
    <property type="entry name" value="UPF0391"/>
    <property type="match status" value="1"/>
</dbReference>
<dbReference type="InterPro" id="IPR009760">
    <property type="entry name" value="DUF1328"/>
</dbReference>
<dbReference type="NCBIfam" id="NF010226">
    <property type="entry name" value="PRK13682.1-1"/>
    <property type="match status" value="1"/>
</dbReference>
<dbReference type="NCBIfam" id="NF010229">
    <property type="entry name" value="PRK13682.1-4"/>
    <property type="match status" value="1"/>
</dbReference>
<dbReference type="Pfam" id="PF07043">
    <property type="entry name" value="DUF1328"/>
    <property type="match status" value="1"/>
</dbReference>
<dbReference type="PIRSF" id="PIRSF036466">
    <property type="entry name" value="UCP036466"/>
    <property type="match status" value="1"/>
</dbReference>
<accession>Q4V056</accession>
<proteinExistence type="inferred from homology"/>